<accession>Q9C0X1</accession>
<evidence type="ECO:0000255" key="1"/>
<evidence type="ECO:0000269" key="2">
    <source>
    </source>
</evidence>
<evidence type="ECO:0000305" key="3"/>
<sequence length="127" mass="15002">MISLTALDLLDELLNDSSSNMIWLYEVYMLYKTYTSYFFMSSKSFVRGVKRYLIYFCYCANFIALFRVIFGTIFVYSPDGITPFMTDFVRWILIYLKGSINSLLYMASFTKQISLLRGWRTEHAELS</sequence>
<dbReference type="EMBL" id="CU329671">
    <property type="protein sequence ID" value="CAC34982.3"/>
    <property type="molecule type" value="Genomic_DNA"/>
</dbReference>
<dbReference type="RefSeq" id="NP_595855.3">
    <property type="nucleotide sequence ID" value="NM_001021759.3"/>
</dbReference>
<dbReference type="BioGRID" id="277310">
    <property type="interactions" value="1"/>
</dbReference>
<dbReference type="PaxDb" id="4896-SPBC18E5.14c.1"/>
<dbReference type="EnsemblFungi" id="SPBC18E5.14c.1">
    <property type="protein sequence ID" value="SPBC18E5.14c.1:pep"/>
    <property type="gene ID" value="SPBC18E5.14c"/>
</dbReference>
<dbReference type="KEGG" id="spo:2540791"/>
<dbReference type="PomBase" id="SPBC18E5.14c"/>
<dbReference type="VEuPathDB" id="FungiDB:SPBC18E5.14c"/>
<dbReference type="HOGENOM" id="CLU_1971791_0_0_1"/>
<dbReference type="InParanoid" id="Q9C0X1"/>
<dbReference type="PRO" id="PR:Q9C0X1"/>
<dbReference type="Proteomes" id="UP000002485">
    <property type="component" value="Chromosome II"/>
</dbReference>
<dbReference type="GO" id="GO:0005737">
    <property type="term" value="C:cytoplasm"/>
    <property type="evidence" value="ECO:0007005"/>
    <property type="project" value="PomBase"/>
</dbReference>
<dbReference type="GO" id="GO:0016020">
    <property type="term" value="C:membrane"/>
    <property type="evidence" value="ECO:0007669"/>
    <property type="project" value="UniProtKB-SubCell"/>
</dbReference>
<comment type="subcellular location">
    <subcellularLocation>
        <location evidence="3">Membrane</location>
        <topology evidence="3">Multi-pass membrane protein</topology>
    </subcellularLocation>
    <subcellularLocation>
        <location evidence="2">Cytoplasm</location>
    </subcellularLocation>
</comment>
<reference key="1">
    <citation type="journal article" date="2002" name="Nature">
        <title>The genome sequence of Schizosaccharomyces pombe.</title>
        <authorList>
            <person name="Wood V."/>
            <person name="Gwilliam R."/>
            <person name="Rajandream M.A."/>
            <person name="Lyne M.H."/>
            <person name="Lyne R."/>
            <person name="Stewart A."/>
            <person name="Sgouros J.G."/>
            <person name="Peat N."/>
            <person name="Hayles J."/>
            <person name="Baker S.G."/>
            <person name="Basham D."/>
            <person name="Bowman S."/>
            <person name="Brooks K."/>
            <person name="Brown D."/>
            <person name="Brown S."/>
            <person name="Chillingworth T."/>
            <person name="Churcher C.M."/>
            <person name="Collins M."/>
            <person name="Connor R."/>
            <person name="Cronin A."/>
            <person name="Davis P."/>
            <person name="Feltwell T."/>
            <person name="Fraser A."/>
            <person name="Gentles S."/>
            <person name="Goble A."/>
            <person name="Hamlin N."/>
            <person name="Harris D.E."/>
            <person name="Hidalgo J."/>
            <person name="Hodgson G."/>
            <person name="Holroyd S."/>
            <person name="Hornsby T."/>
            <person name="Howarth S."/>
            <person name="Huckle E.J."/>
            <person name="Hunt S."/>
            <person name="Jagels K."/>
            <person name="James K.D."/>
            <person name="Jones L."/>
            <person name="Jones M."/>
            <person name="Leather S."/>
            <person name="McDonald S."/>
            <person name="McLean J."/>
            <person name="Mooney P."/>
            <person name="Moule S."/>
            <person name="Mungall K.L."/>
            <person name="Murphy L.D."/>
            <person name="Niblett D."/>
            <person name="Odell C."/>
            <person name="Oliver K."/>
            <person name="O'Neil S."/>
            <person name="Pearson D."/>
            <person name="Quail M.A."/>
            <person name="Rabbinowitsch E."/>
            <person name="Rutherford K.M."/>
            <person name="Rutter S."/>
            <person name="Saunders D."/>
            <person name="Seeger K."/>
            <person name="Sharp S."/>
            <person name="Skelton J."/>
            <person name="Simmonds M.N."/>
            <person name="Squares R."/>
            <person name="Squares S."/>
            <person name="Stevens K."/>
            <person name="Taylor K."/>
            <person name="Taylor R.G."/>
            <person name="Tivey A."/>
            <person name="Walsh S.V."/>
            <person name="Warren T."/>
            <person name="Whitehead S."/>
            <person name="Woodward J.R."/>
            <person name="Volckaert G."/>
            <person name="Aert R."/>
            <person name="Robben J."/>
            <person name="Grymonprez B."/>
            <person name="Weltjens I."/>
            <person name="Vanstreels E."/>
            <person name="Rieger M."/>
            <person name="Schaefer M."/>
            <person name="Mueller-Auer S."/>
            <person name="Gabel C."/>
            <person name="Fuchs M."/>
            <person name="Duesterhoeft A."/>
            <person name="Fritzc C."/>
            <person name="Holzer E."/>
            <person name="Moestl D."/>
            <person name="Hilbert H."/>
            <person name="Borzym K."/>
            <person name="Langer I."/>
            <person name="Beck A."/>
            <person name="Lehrach H."/>
            <person name="Reinhardt R."/>
            <person name="Pohl T.M."/>
            <person name="Eger P."/>
            <person name="Zimmermann W."/>
            <person name="Wedler H."/>
            <person name="Wambutt R."/>
            <person name="Purnelle B."/>
            <person name="Goffeau A."/>
            <person name="Cadieu E."/>
            <person name="Dreano S."/>
            <person name="Gloux S."/>
            <person name="Lelaure V."/>
            <person name="Mottier S."/>
            <person name="Galibert F."/>
            <person name="Aves S.J."/>
            <person name="Xiang Z."/>
            <person name="Hunt C."/>
            <person name="Moore K."/>
            <person name="Hurst S.M."/>
            <person name="Lucas M."/>
            <person name="Rochet M."/>
            <person name="Gaillardin C."/>
            <person name="Tallada V.A."/>
            <person name="Garzon A."/>
            <person name="Thode G."/>
            <person name="Daga R.R."/>
            <person name="Cruzado L."/>
            <person name="Jimenez J."/>
            <person name="Sanchez M."/>
            <person name="del Rey F."/>
            <person name="Benito J."/>
            <person name="Dominguez A."/>
            <person name="Revuelta J.L."/>
            <person name="Moreno S."/>
            <person name="Armstrong J."/>
            <person name="Forsburg S.L."/>
            <person name="Cerutti L."/>
            <person name="Lowe T."/>
            <person name="McCombie W.R."/>
            <person name="Paulsen I."/>
            <person name="Potashkin J."/>
            <person name="Shpakovski G.V."/>
            <person name="Ussery D."/>
            <person name="Barrell B.G."/>
            <person name="Nurse P."/>
        </authorList>
    </citation>
    <scope>NUCLEOTIDE SEQUENCE [LARGE SCALE GENOMIC DNA]</scope>
    <source>
        <strain>972 / ATCC 24843</strain>
    </source>
</reference>
<reference key="2">
    <citation type="journal article" date="2011" name="Science">
        <title>Comparative functional genomics of the fission yeasts.</title>
        <authorList>
            <person name="Rhind N."/>
            <person name="Chen Z."/>
            <person name="Yassour M."/>
            <person name="Thompson D.A."/>
            <person name="Haas B.J."/>
            <person name="Habib N."/>
            <person name="Wapinski I."/>
            <person name="Roy S."/>
            <person name="Lin M.F."/>
            <person name="Heiman D.I."/>
            <person name="Young S.K."/>
            <person name="Furuya K."/>
            <person name="Guo Y."/>
            <person name="Pidoux A."/>
            <person name="Chen H.M."/>
            <person name="Robbertse B."/>
            <person name="Goldberg J.M."/>
            <person name="Aoki K."/>
            <person name="Bayne E.H."/>
            <person name="Berlin A.M."/>
            <person name="Desjardins C.A."/>
            <person name="Dobbs E."/>
            <person name="Dukaj L."/>
            <person name="Fan L."/>
            <person name="FitzGerald M.G."/>
            <person name="French C."/>
            <person name="Gujja S."/>
            <person name="Hansen K."/>
            <person name="Keifenheim D."/>
            <person name="Levin J.Z."/>
            <person name="Mosher R.A."/>
            <person name="Mueller C.A."/>
            <person name="Pfiffner J."/>
            <person name="Priest M."/>
            <person name="Russ C."/>
            <person name="Smialowska A."/>
            <person name="Swoboda P."/>
            <person name="Sykes S.M."/>
            <person name="Vaughn M."/>
            <person name="Vengrova S."/>
            <person name="Yoder R."/>
            <person name="Zeng Q."/>
            <person name="Allshire R."/>
            <person name="Baulcombe D."/>
            <person name="Birren B.W."/>
            <person name="Brown W."/>
            <person name="Ekwall K."/>
            <person name="Kellis M."/>
            <person name="Leatherwood J."/>
            <person name="Levin H."/>
            <person name="Margalit H."/>
            <person name="Martienssen R."/>
            <person name="Nieduszynski C.A."/>
            <person name="Spatafora J.W."/>
            <person name="Friedman N."/>
            <person name="Dalgaard J.Z."/>
            <person name="Baumann P."/>
            <person name="Niki H."/>
            <person name="Regev A."/>
            <person name="Nusbaum C."/>
        </authorList>
    </citation>
    <scope>REVISION OF GENE MODEL</scope>
</reference>
<reference key="3">
    <citation type="journal article" date="2006" name="Nat. Biotechnol.">
        <title>ORFeome cloning and global analysis of protein localization in the fission yeast Schizosaccharomyces pombe.</title>
        <authorList>
            <person name="Matsuyama A."/>
            <person name="Arai R."/>
            <person name="Yashiroda Y."/>
            <person name="Shirai A."/>
            <person name="Kamata A."/>
            <person name="Sekido S."/>
            <person name="Kobayashi Y."/>
            <person name="Hashimoto A."/>
            <person name="Hamamoto M."/>
            <person name="Hiraoka Y."/>
            <person name="Horinouchi S."/>
            <person name="Yoshida M."/>
        </authorList>
    </citation>
    <scope>SUBCELLULAR LOCATION [LARGE SCALE ANALYSIS]</scope>
</reference>
<organism>
    <name type="scientific">Schizosaccharomyces pombe (strain 972 / ATCC 24843)</name>
    <name type="common">Fission yeast</name>
    <dbReference type="NCBI Taxonomy" id="284812"/>
    <lineage>
        <taxon>Eukaryota</taxon>
        <taxon>Fungi</taxon>
        <taxon>Dikarya</taxon>
        <taxon>Ascomycota</taxon>
        <taxon>Taphrinomycotina</taxon>
        <taxon>Schizosaccharomycetes</taxon>
        <taxon>Schizosaccharomycetales</taxon>
        <taxon>Schizosaccharomycetaceae</taxon>
        <taxon>Schizosaccharomyces</taxon>
    </lineage>
</organism>
<gene>
    <name type="ORF">SPBC18E5.14c</name>
</gene>
<keyword id="KW-0963">Cytoplasm</keyword>
<keyword id="KW-0472">Membrane</keyword>
<keyword id="KW-1185">Reference proteome</keyword>
<keyword id="KW-0812">Transmembrane</keyword>
<keyword id="KW-1133">Transmembrane helix</keyword>
<name>YBSE_SCHPO</name>
<protein>
    <recommendedName>
        <fullName>Uncharacterized membrane protein C18E5.14c</fullName>
    </recommendedName>
</protein>
<proteinExistence type="predicted"/>
<feature type="chain" id="PRO_0000303933" description="Uncharacterized membrane protein C18E5.14c">
    <location>
        <begin position="1"/>
        <end position="127"/>
    </location>
</feature>
<feature type="transmembrane region" description="Helical" evidence="1">
    <location>
        <begin position="20"/>
        <end position="42"/>
    </location>
</feature>
<feature type="transmembrane region" description="Helical" evidence="1">
    <location>
        <begin position="54"/>
        <end position="76"/>
    </location>
</feature>
<feature type="transmembrane region" description="Helical" evidence="1">
    <location>
        <begin position="91"/>
        <end position="110"/>
    </location>
</feature>